<comment type="function">
    <text evidence="1">NDH-1 shuttles electrons from NADH, via FMN and iron-sulfur (Fe-S) centers, to quinones in the respiratory chain. The immediate electron acceptor for the enzyme in this species is believed to be ubiquinone. Couples the redox reaction to proton translocation (for every two electrons transferred, four hydrogen ions are translocated across the cytoplasmic membrane), and thus conserves the redox energy in a proton gradient.</text>
</comment>
<comment type="catalytic activity">
    <reaction evidence="1">
        <text>a quinone + NADH + 5 H(+)(in) = a quinol + NAD(+) + 4 H(+)(out)</text>
        <dbReference type="Rhea" id="RHEA:57888"/>
        <dbReference type="ChEBI" id="CHEBI:15378"/>
        <dbReference type="ChEBI" id="CHEBI:24646"/>
        <dbReference type="ChEBI" id="CHEBI:57540"/>
        <dbReference type="ChEBI" id="CHEBI:57945"/>
        <dbReference type="ChEBI" id="CHEBI:132124"/>
    </reaction>
</comment>
<comment type="subunit">
    <text evidence="1">NDH-1 is composed of 13 different subunits. Subunits NuoA, H, J, K, L, M, N constitute the membrane sector of the complex.</text>
</comment>
<comment type="subcellular location">
    <subcellularLocation>
        <location evidence="1">Cell inner membrane</location>
        <topology evidence="1">Multi-pass membrane protein</topology>
    </subcellularLocation>
</comment>
<comment type="similarity">
    <text evidence="1">Belongs to the complex I subunit 2 family.</text>
</comment>
<name>NUON_YERP3</name>
<proteinExistence type="inferred from homology"/>
<sequence>MTITPQQLIAMLPLLIVGLTVVVVMLSIAWRRDHFINATLTVIGLNLALLSLYFVGQVGPMDVTPLMRVDGYSMFYTGLVIIASLATSTFAYPWLVGYPDNREEFYLLVLIAALGGILLASANHLASLFLGIELLTLPLFGLIGYAYRQKRSLEASIKYMLLSAAASSFLLFGMALLYAESGSLSFVGLGQSLSDSMVHQPLILAGLGMMIVGLGFKLSLVPFQLWTPDVYQGAPAPVSTFLATASKIAIFAVVMRLFMYAPAADSEAVRLVLSIIAVASILFGNLMAISQTNIKRLLGYSSIAHLGYLLIALVAVQTHELALPLETIGVYLAGYLFSSLGAFGVVSLMSSPYKGPDAESLFSYRGLFWHKPILSAVMTVMMLSLAGIPMTLGFIGKFFVVAMGVSANLWWLTGAVVLGSAIGLYYYLRVTVSLFLSPPQSLVRDTPSNWALTAGGVVVLISAILVLVLGIYPQPLITLVQMAQPLM</sequence>
<dbReference type="EC" id="7.1.1.-" evidence="1"/>
<dbReference type="EMBL" id="CP000720">
    <property type="protein sequence ID" value="ABS46819.1"/>
    <property type="molecule type" value="Genomic_DNA"/>
</dbReference>
<dbReference type="RefSeq" id="WP_002210268.1">
    <property type="nucleotide sequence ID" value="NC_009708.1"/>
</dbReference>
<dbReference type="SMR" id="A7FGR6"/>
<dbReference type="GeneID" id="57976146"/>
<dbReference type="KEGG" id="ypi:YpsIP31758_1466"/>
<dbReference type="HOGENOM" id="CLU_007100_1_5_6"/>
<dbReference type="Proteomes" id="UP000002412">
    <property type="component" value="Chromosome"/>
</dbReference>
<dbReference type="GO" id="GO:0005886">
    <property type="term" value="C:plasma membrane"/>
    <property type="evidence" value="ECO:0007669"/>
    <property type="project" value="UniProtKB-SubCell"/>
</dbReference>
<dbReference type="GO" id="GO:0008137">
    <property type="term" value="F:NADH dehydrogenase (ubiquinone) activity"/>
    <property type="evidence" value="ECO:0007669"/>
    <property type="project" value="InterPro"/>
</dbReference>
<dbReference type="GO" id="GO:0050136">
    <property type="term" value="F:NADH:ubiquinone reductase (non-electrogenic) activity"/>
    <property type="evidence" value="ECO:0007669"/>
    <property type="project" value="UniProtKB-UniRule"/>
</dbReference>
<dbReference type="GO" id="GO:0048038">
    <property type="term" value="F:quinone binding"/>
    <property type="evidence" value="ECO:0007669"/>
    <property type="project" value="UniProtKB-KW"/>
</dbReference>
<dbReference type="GO" id="GO:0042773">
    <property type="term" value="P:ATP synthesis coupled electron transport"/>
    <property type="evidence" value="ECO:0007669"/>
    <property type="project" value="InterPro"/>
</dbReference>
<dbReference type="HAMAP" id="MF_00445">
    <property type="entry name" value="NDH1_NuoN_1"/>
    <property type="match status" value="1"/>
</dbReference>
<dbReference type="InterPro" id="IPR010096">
    <property type="entry name" value="NADH-Q_OxRdtase_suN/2"/>
</dbReference>
<dbReference type="InterPro" id="IPR001750">
    <property type="entry name" value="ND/Mrp_TM"/>
</dbReference>
<dbReference type="NCBIfam" id="TIGR01770">
    <property type="entry name" value="NDH_I_N"/>
    <property type="match status" value="1"/>
</dbReference>
<dbReference type="NCBIfam" id="NF004439">
    <property type="entry name" value="PRK05777.1-1"/>
    <property type="match status" value="1"/>
</dbReference>
<dbReference type="PANTHER" id="PTHR22773">
    <property type="entry name" value="NADH DEHYDROGENASE"/>
    <property type="match status" value="1"/>
</dbReference>
<dbReference type="Pfam" id="PF00361">
    <property type="entry name" value="Proton_antipo_M"/>
    <property type="match status" value="1"/>
</dbReference>
<keyword id="KW-0997">Cell inner membrane</keyword>
<keyword id="KW-1003">Cell membrane</keyword>
<keyword id="KW-0472">Membrane</keyword>
<keyword id="KW-0520">NAD</keyword>
<keyword id="KW-0874">Quinone</keyword>
<keyword id="KW-1278">Translocase</keyword>
<keyword id="KW-0812">Transmembrane</keyword>
<keyword id="KW-1133">Transmembrane helix</keyword>
<keyword id="KW-0813">Transport</keyword>
<keyword id="KW-0830">Ubiquinone</keyword>
<organism>
    <name type="scientific">Yersinia pseudotuberculosis serotype O:1b (strain IP 31758)</name>
    <dbReference type="NCBI Taxonomy" id="349747"/>
    <lineage>
        <taxon>Bacteria</taxon>
        <taxon>Pseudomonadati</taxon>
        <taxon>Pseudomonadota</taxon>
        <taxon>Gammaproteobacteria</taxon>
        <taxon>Enterobacterales</taxon>
        <taxon>Yersiniaceae</taxon>
        <taxon>Yersinia</taxon>
    </lineage>
</organism>
<gene>
    <name evidence="1" type="primary">nuoN</name>
    <name type="ordered locus">YpsIP31758_1466</name>
</gene>
<accession>A7FGR6</accession>
<reference key="1">
    <citation type="journal article" date="2007" name="PLoS Genet.">
        <title>The complete genome sequence of Yersinia pseudotuberculosis IP31758, the causative agent of Far East scarlet-like fever.</title>
        <authorList>
            <person name="Eppinger M."/>
            <person name="Rosovitz M.J."/>
            <person name="Fricke W.F."/>
            <person name="Rasko D.A."/>
            <person name="Kokorina G."/>
            <person name="Fayolle C."/>
            <person name="Lindler L.E."/>
            <person name="Carniel E."/>
            <person name="Ravel J."/>
        </authorList>
    </citation>
    <scope>NUCLEOTIDE SEQUENCE [LARGE SCALE GENOMIC DNA]</scope>
    <source>
        <strain>IP 31758</strain>
    </source>
</reference>
<protein>
    <recommendedName>
        <fullName evidence="1">NADH-quinone oxidoreductase subunit N</fullName>
        <ecNumber evidence="1">7.1.1.-</ecNumber>
    </recommendedName>
    <alternativeName>
        <fullName evidence="1">NADH dehydrogenase I subunit N</fullName>
    </alternativeName>
    <alternativeName>
        <fullName evidence="1">NDH-1 subunit N</fullName>
    </alternativeName>
</protein>
<feature type="chain" id="PRO_1000068541" description="NADH-quinone oxidoreductase subunit N">
    <location>
        <begin position="1"/>
        <end position="487"/>
    </location>
</feature>
<feature type="transmembrane region" description="Helical" evidence="1">
    <location>
        <begin position="8"/>
        <end position="28"/>
    </location>
</feature>
<feature type="transmembrane region" description="Helical" evidence="1">
    <location>
        <begin position="35"/>
        <end position="55"/>
    </location>
</feature>
<feature type="transmembrane region" description="Helical" evidence="1">
    <location>
        <begin position="78"/>
        <end position="98"/>
    </location>
</feature>
<feature type="transmembrane region" description="Helical" evidence="1">
    <location>
        <begin position="104"/>
        <end position="124"/>
    </location>
</feature>
<feature type="transmembrane region" description="Helical" evidence="1">
    <location>
        <begin position="125"/>
        <end position="145"/>
    </location>
</feature>
<feature type="transmembrane region" description="Helical" evidence="1">
    <location>
        <begin position="159"/>
        <end position="179"/>
    </location>
</feature>
<feature type="transmembrane region" description="Helical" evidence="1">
    <location>
        <begin position="203"/>
        <end position="223"/>
    </location>
</feature>
<feature type="transmembrane region" description="Helical" evidence="1">
    <location>
        <begin position="235"/>
        <end position="255"/>
    </location>
</feature>
<feature type="transmembrane region" description="Helical" evidence="1">
    <location>
        <begin position="271"/>
        <end position="291"/>
    </location>
</feature>
<feature type="transmembrane region" description="Helical" evidence="1">
    <location>
        <begin position="297"/>
        <end position="317"/>
    </location>
</feature>
<feature type="transmembrane region" description="Helical" evidence="1">
    <location>
        <begin position="328"/>
        <end position="348"/>
    </location>
</feature>
<feature type="transmembrane region" description="Helical" evidence="1">
    <location>
        <begin position="376"/>
        <end position="396"/>
    </location>
</feature>
<feature type="transmembrane region" description="Helical" evidence="1">
    <location>
        <begin position="409"/>
        <end position="428"/>
    </location>
</feature>
<feature type="transmembrane region" description="Helical" evidence="1">
    <location>
        <begin position="451"/>
        <end position="471"/>
    </location>
</feature>
<evidence type="ECO:0000255" key="1">
    <source>
        <dbReference type="HAMAP-Rule" id="MF_00445"/>
    </source>
</evidence>